<protein>
    <recommendedName>
        <fullName>Zona pellucida sperm-binding protein 3</fullName>
    </recommendedName>
    <alternativeName>
        <fullName>Sperm receptor</fullName>
    </alternativeName>
    <alternativeName>
        <fullName>Zona pellucida glycoprotein 3</fullName>
        <shortName>Zp-3</shortName>
    </alternativeName>
    <alternativeName>
        <fullName>Zona pellucida protein C</fullName>
    </alternativeName>
    <component>
        <recommendedName>
            <fullName>Processed zona pellucida sperm-binding protein 3</fullName>
        </recommendedName>
    </component>
</protein>
<accession>P53786</accession>
<organism>
    <name type="scientific">Callithrix sp.</name>
    <name type="common">Marmoset</name>
    <dbReference type="NCBI Taxonomy" id="9485"/>
    <lineage>
        <taxon>Eukaryota</taxon>
        <taxon>Metazoa</taxon>
        <taxon>Chordata</taxon>
        <taxon>Craniata</taxon>
        <taxon>Vertebrata</taxon>
        <taxon>Euteleostomi</taxon>
        <taxon>Mammalia</taxon>
        <taxon>Eutheria</taxon>
        <taxon>Euarchontoglires</taxon>
        <taxon>Primates</taxon>
        <taxon>Haplorrhini</taxon>
        <taxon>Platyrrhini</taxon>
        <taxon>Cebidae</taxon>
        <taxon>Callitrichinae</taxon>
        <taxon>Callithrix</taxon>
        <taxon>Callithrix</taxon>
    </lineage>
</organism>
<dbReference type="EMBL" id="S71825">
    <property type="protein sequence ID" value="AAB31866.1"/>
    <property type="molecule type" value="mRNA"/>
</dbReference>
<dbReference type="SMR" id="P53786"/>
<dbReference type="GlyCosmos" id="P53786">
    <property type="glycosylation" value="8 sites, No reported glycans"/>
</dbReference>
<dbReference type="GO" id="GO:0062023">
    <property type="term" value="C:collagen-containing extracellular matrix"/>
    <property type="evidence" value="ECO:0000250"/>
    <property type="project" value="UniProtKB"/>
</dbReference>
<dbReference type="GO" id="GO:0035805">
    <property type="term" value="C:egg coat"/>
    <property type="evidence" value="ECO:0000250"/>
    <property type="project" value="UniProtKB"/>
</dbReference>
<dbReference type="GO" id="GO:0005615">
    <property type="term" value="C:extracellular space"/>
    <property type="evidence" value="ECO:0000250"/>
    <property type="project" value="UniProtKB"/>
</dbReference>
<dbReference type="GO" id="GO:0005886">
    <property type="term" value="C:plasma membrane"/>
    <property type="evidence" value="ECO:0000250"/>
    <property type="project" value="UniProtKB"/>
</dbReference>
<dbReference type="GO" id="GO:0032190">
    <property type="term" value="F:acrosin binding"/>
    <property type="evidence" value="ECO:0007669"/>
    <property type="project" value="TreeGrafter"/>
</dbReference>
<dbReference type="GO" id="GO:0030246">
    <property type="term" value="F:carbohydrate binding"/>
    <property type="evidence" value="ECO:0000250"/>
    <property type="project" value="UniProtKB"/>
</dbReference>
<dbReference type="GO" id="GO:0048018">
    <property type="term" value="F:receptor ligand activity"/>
    <property type="evidence" value="ECO:0000250"/>
    <property type="project" value="UniProtKB"/>
</dbReference>
<dbReference type="GO" id="GO:0035804">
    <property type="term" value="F:structural constituent of egg coat"/>
    <property type="evidence" value="ECO:0000250"/>
    <property type="project" value="UniProtKB"/>
</dbReference>
<dbReference type="GO" id="GO:0007339">
    <property type="term" value="P:binding of sperm to zona pellucida"/>
    <property type="evidence" value="ECO:0000250"/>
    <property type="project" value="UniProtKB"/>
</dbReference>
<dbReference type="GO" id="GO:0001825">
    <property type="term" value="P:blastocyst formation"/>
    <property type="evidence" value="ECO:0000250"/>
    <property type="project" value="UniProtKB"/>
</dbReference>
<dbReference type="GO" id="GO:0035803">
    <property type="term" value="P:egg coat formation"/>
    <property type="evidence" value="ECO:0000250"/>
    <property type="project" value="UniProtKB"/>
</dbReference>
<dbReference type="GO" id="GO:0002455">
    <property type="term" value="P:humoral immune response mediated by circulating immunoglobulin"/>
    <property type="evidence" value="ECO:0000250"/>
    <property type="project" value="UniProtKB"/>
</dbReference>
<dbReference type="GO" id="GO:2000360">
    <property type="term" value="P:negative regulation of binding of sperm to zona pellucida"/>
    <property type="evidence" value="ECO:0000250"/>
    <property type="project" value="UniProtKB"/>
</dbReference>
<dbReference type="GO" id="GO:0045892">
    <property type="term" value="P:negative regulation of DNA-templated transcription"/>
    <property type="evidence" value="ECO:0000250"/>
    <property type="project" value="UniProtKB"/>
</dbReference>
<dbReference type="GO" id="GO:0048599">
    <property type="term" value="P:oocyte development"/>
    <property type="evidence" value="ECO:0000250"/>
    <property type="project" value="UniProtKB"/>
</dbReference>
<dbReference type="GO" id="GO:2000368">
    <property type="term" value="P:positive regulation of acrosomal vesicle exocytosis"/>
    <property type="evidence" value="ECO:0000250"/>
    <property type="project" value="UniProtKB"/>
</dbReference>
<dbReference type="GO" id="GO:2000344">
    <property type="term" value="P:positive regulation of acrosome reaction"/>
    <property type="evidence" value="ECO:0000250"/>
    <property type="project" value="UniProtKB"/>
</dbReference>
<dbReference type="GO" id="GO:2000388">
    <property type="term" value="P:positive regulation of antral ovarian follicle growth"/>
    <property type="evidence" value="ECO:0000250"/>
    <property type="project" value="UniProtKB"/>
</dbReference>
<dbReference type="GO" id="GO:0045893">
    <property type="term" value="P:positive regulation of DNA-templated transcription"/>
    <property type="evidence" value="ECO:0000250"/>
    <property type="project" value="UniProtKB"/>
</dbReference>
<dbReference type="GO" id="GO:0002922">
    <property type="term" value="P:positive regulation of humoral immune response"/>
    <property type="evidence" value="ECO:0000250"/>
    <property type="project" value="UniProtKB"/>
</dbReference>
<dbReference type="GO" id="GO:0050729">
    <property type="term" value="P:positive regulation of inflammatory response"/>
    <property type="evidence" value="ECO:0000250"/>
    <property type="project" value="UniProtKB"/>
</dbReference>
<dbReference type="GO" id="GO:0032753">
    <property type="term" value="P:positive regulation of interleukin-4 production"/>
    <property type="evidence" value="ECO:0000250"/>
    <property type="project" value="UniProtKB"/>
</dbReference>
<dbReference type="GO" id="GO:0002687">
    <property type="term" value="P:positive regulation of leukocyte migration"/>
    <property type="evidence" value="ECO:0000250"/>
    <property type="project" value="UniProtKB"/>
</dbReference>
<dbReference type="GO" id="GO:2000386">
    <property type="term" value="P:positive regulation of ovarian follicle development"/>
    <property type="evidence" value="ECO:0000250"/>
    <property type="project" value="UniProtKB"/>
</dbReference>
<dbReference type="GO" id="GO:0042102">
    <property type="term" value="P:positive regulation of T cell proliferation"/>
    <property type="evidence" value="ECO:0000250"/>
    <property type="project" value="UniProtKB"/>
</dbReference>
<dbReference type="GO" id="GO:0032729">
    <property type="term" value="P:positive regulation of type II interferon production"/>
    <property type="evidence" value="ECO:0000250"/>
    <property type="project" value="UniProtKB"/>
</dbReference>
<dbReference type="GO" id="GO:0001809">
    <property type="term" value="P:positive regulation of type IV hypersensitivity"/>
    <property type="evidence" value="ECO:0000250"/>
    <property type="project" value="UniProtKB"/>
</dbReference>
<dbReference type="FunFam" id="2.60.40.3210:FF:000001">
    <property type="entry name" value="Zona pellucida sperm-binding protein 3"/>
    <property type="match status" value="1"/>
</dbReference>
<dbReference type="FunFam" id="2.60.40.4100:FF:000002">
    <property type="entry name" value="Zona pellucida sperm-binding protein 3"/>
    <property type="match status" value="1"/>
</dbReference>
<dbReference type="Gene3D" id="2.60.40.4100">
    <property type="entry name" value="Zona pellucida, ZP-C domain"/>
    <property type="match status" value="1"/>
</dbReference>
<dbReference type="Gene3D" id="2.60.40.3210">
    <property type="entry name" value="Zona pellucida, ZP-N domain"/>
    <property type="match status" value="1"/>
</dbReference>
<dbReference type="InterPro" id="IPR055355">
    <property type="entry name" value="ZP-C"/>
</dbReference>
<dbReference type="InterPro" id="IPR042235">
    <property type="entry name" value="ZP-C_dom"/>
</dbReference>
<dbReference type="InterPro" id="IPR055356">
    <property type="entry name" value="ZP-N"/>
</dbReference>
<dbReference type="InterPro" id="IPR048290">
    <property type="entry name" value="ZP_chr"/>
</dbReference>
<dbReference type="InterPro" id="IPR001507">
    <property type="entry name" value="ZP_dom"/>
</dbReference>
<dbReference type="InterPro" id="IPR017977">
    <property type="entry name" value="ZP_dom_CS"/>
</dbReference>
<dbReference type="PANTHER" id="PTHR11576">
    <property type="entry name" value="ZONA PELLUCIDA SPERM-BINDING PROTEIN 3"/>
    <property type="match status" value="1"/>
</dbReference>
<dbReference type="PANTHER" id="PTHR11576:SF2">
    <property type="entry name" value="ZONA PELLUCIDA SPERM-BINDING PROTEIN 3"/>
    <property type="match status" value="1"/>
</dbReference>
<dbReference type="Pfam" id="PF00100">
    <property type="entry name" value="Zona_pellucida"/>
    <property type="match status" value="1"/>
</dbReference>
<dbReference type="Pfam" id="PF23344">
    <property type="entry name" value="ZP-N"/>
    <property type="match status" value="1"/>
</dbReference>
<dbReference type="PRINTS" id="PR00023">
    <property type="entry name" value="ZPELLUCIDA"/>
</dbReference>
<dbReference type="SMART" id="SM00241">
    <property type="entry name" value="ZP"/>
    <property type="match status" value="1"/>
</dbReference>
<dbReference type="PROSITE" id="PS00682">
    <property type="entry name" value="ZP_1"/>
    <property type="match status" value="1"/>
</dbReference>
<dbReference type="PROSITE" id="PS51034">
    <property type="entry name" value="ZP_2"/>
    <property type="match status" value="1"/>
</dbReference>
<comment type="function">
    <text>Component of the zona pellucida, an extracellular matrix surrounding oocytes which mediates sperm binding, induction of the acrosome reaction and prevents post-fertilization polyspermy. The zona pellucida is composed of 3 to 4 glycoproteins, ZP1, ZP2, ZP3, and ZP4. ZP3 is essential for sperm binding and zona matrix formation.</text>
</comment>
<comment type="subunit">
    <text evidence="2 3">Polymers of ZP2 and ZP3 organized into long filaments cross-linked by ZP1 homodimers. Interacts with ZP1 and ZP2.</text>
</comment>
<comment type="subcellular location">
    <molecule>Processed zona pellucida sperm-binding protein 3</molecule>
    <subcellularLocation>
        <location evidence="3">Zona pellucida</location>
    </subcellularLocation>
</comment>
<comment type="subcellular location">
    <subcellularLocation>
        <location evidence="4">Cell membrane</location>
        <topology evidence="5">Single-pass type I membrane protein</topology>
    </subcellularLocation>
</comment>
<comment type="tissue specificity">
    <text>Expressed in oocytes.</text>
</comment>
<comment type="domain">
    <text>The ZP domain is involved in the polymerization of the ZP proteins to form the zona pellucida.</text>
</comment>
<comment type="PTM">
    <text>Proteolytically cleaved before the transmembrane segment to yield the secreted ectodomain incorporated in the zona pellucida.</text>
</comment>
<comment type="PTM">
    <text evidence="1">N-glycosylated.</text>
</comment>
<comment type="PTM">
    <text evidence="1">O-glycosylated; removal of O-linked glycans may play an important role in the post-fertilization block to polyspermy.</text>
</comment>
<comment type="similarity">
    <text evidence="7">Belongs to the ZP domain family. ZPC subfamily.</text>
</comment>
<comment type="online information" name="Protein Spotlight">
    <link uri="https://www.proteinspotlight.org/back_issues/093"/>
    <text>Molecular chastity - Issue 93 of April 2008</text>
</comment>
<evidence type="ECO:0000250" key="1"/>
<evidence type="ECO:0000250" key="2">
    <source>
        <dbReference type="UniProtKB" id="P20239"/>
    </source>
</evidence>
<evidence type="ECO:0000250" key="3">
    <source>
        <dbReference type="UniProtKB" id="P21754"/>
    </source>
</evidence>
<evidence type="ECO:0000250" key="4">
    <source>
        <dbReference type="UniProtKB" id="P48833"/>
    </source>
</evidence>
<evidence type="ECO:0000255" key="5"/>
<evidence type="ECO:0000255" key="6">
    <source>
        <dbReference type="PROSITE-ProRule" id="PRU00375"/>
    </source>
</evidence>
<evidence type="ECO:0000305" key="7"/>
<gene>
    <name type="primary">ZP3</name>
    <name type="synonym">ZPC</name>
</gene>
<name>ZP3_CALSQ</name>
<proteinExistence type="evidence at transcript level"/>
<sequence length="424" mass="46809">MELSYRLFICLLLWGSTELCYPQPLRLLQGGTSHPETALQPVVVECQEATLVVTVSKDLFGTRKLIRAVDLTLGPEGCEPLVSTDTEDVVRFEVGLHECGNSMQVTDDALVYSTFLLHDPRPVGNLSIVRTNRAEIPIECRYPRRGNVSSQAILPTWLPFRTTVFSEEKLTFSLRLMEENWSTEKRTPTFHLGDVAHLQAEIHTGSHVPLRLFVDHCVATPTPDQNASPYHTIVDFHGCLVDGLTDASSAFQAPRPRPDTLQFTVDVFHFANDSRNMIYITCHLKVTLAEQDPDELNKACSFSKASNSWFPVEGPADICQCCSKGDCGTPSHARRQPHVVSLGSGSPARDRRHVTEEADVTVGPLIFLDRTGDHEMEQWALPADTSLLLLGTGLAVVALLTLTAVILVLTRRCRTASLPVSASE</sequence>
<keyword id="KW-1003">Cell membrane</keyword>
<keyword id="KW-0165">Cleavage on pair of basic residues</keyword>
<keyword id="KW-1015">Disulfide bond</keyword>
<keyword id="KW-0272">Extracellular matrix</keyword>
<keyword id="KW-0278">Fertilization</keyword>
<keyword id="KW-0325">Glycoprotein</keyword>
<keyword id="KW-0472">Membrane</keyword>
<keyword id="KW-0873">Pyrrolidone carboxylic acid</keyword>
<keyword id="KW-0675">Receptor</keyword>
<keyword id="KW-0964">Secreted</keyword>
<keyword id="KW-0732">Signal</keyword>
<keyword id="KW-0812">Transmembrane</keyword>
<keyword id="KW-1133">Transmembrane helix</keyword>
<reference key="1">
    <citation type="journal article" date="1993" name="Zygote">
        <title>Cloning, sequencing and oocyte-specific expression of the marmoset sperm receptor protein, ZP3.</title>
        <authorList>
            <person name="Thillai-Koothan P."/>
            <person name="van Duin M."/>
            <person name="Aitken R.J."/>
        </authorList>
    </citation>
    <scope>NUCLEOTIDE SEQUENCE [MRNA]</scope>
    <source>
        <tissue>Ovary</tissue>
    </source>
</reference>
<feature type="signal peptide" evidence="1">
    <location>
        <begin position="1"/>
        <end position="22"/>
    </location>
</feature>
<feature type="chain" id="PRO_0000041703" description="Zona pellucida sperm-binding protein 3">
    <location>
        <begin position="23"/>
        <end position="350"/>
    </location>
</feature>
<feature type="chain" id="PRO_0000304566" description="Processed zona pellucida sperm-binding protein 3">
    <location>
        <begin position="23"/>
        <end status="unknown"/>
    </location>
</feature>
<feature type="propeptide" id="PRO_0000041704" description="Removed in mature form" evidence="1">
    <location>
        <begin position="351"/>
        <end position="424"/>
    </location>
</feature>
<feature type="topological domain" description="Extracellular" evidence="5">
    <location>
        <begin position="23"/>
        <end position="387"/>
    </location>
</feature>
<feature type="transmembrane region" description="Helical" evidence="5">
    <location>
        <begin position="388"/>
        <end position="408"/>
    </location>
</feature>
<feature type="topological domain" description="Cytoplasmic" evidence="5">
    <location>
        <begin position="409"/>
        <end position="424"/>
    </location>
</feature>
<feature type="domain" description="ZP" evidence="6">
    <location>
        <begin position="45"/>
        <end position="307"/>
    </location>
</feature>
<feature type="modified residue" description="Pyrrolidone carboxylic acid" evidence="3">
    <location>
        <position position="23"/>
    </location>
</feature>
<feature type="glycosylation site" description="O-linked (GalNAc...) threonine" evidence="1">
    <location>
        <position position="32"/>
    </location>
</feature>
<feature type="glycosylation site" description="N-linked (GlcNAc...) asparagine" evidence="1">
    <location>
        <position position="125"/>
    </location>
</feature>
<feature type="glycosylation site" description="N-linked (GlcNAc...) asparagine" evidence="1">
    <location>
        <position position="147"/>
    </location>
</feature>
<feature type="glycosylation site" description="O-linked (GalNAc...) threonine" evidence="1">
    <location>
        <position position="156"/>
    </location>
</feature>
<feature type="glycosylation site" description="O-linked (GalNAc...) threonine" evidence="1">
    <location>
        <position position="162"/>
    </location>
</feature>
<feature type="glycosylation site" description="O-linked (GalNAc...) threonine" evidence="1">
    <location>
        <position position="163"/>
    </location>
</feature>
<feature type="glycosylation site" description="N-linked (GlcNAc...) asparagine" evidence="5">
    <location>
        <position position="180"/>
    </location>
</feature>
<feature type="glycosylation site" description="N-linked (GlcNAc...) asparagine" evidence="1">
    <location>
        <position position="272"/>
    </location>
</feature>
<feature type="disulfide bond" evidence="1">
    <location>
        <begin position="46"/>
        <end position="140"/>
    </location>
</feature>
<feature type="disulfide bond" evidence="1">
    <location>
        <begin position="78"/>
        <end position="99"/>
    </location>
</feature>
<feature type="disulfide bond" evidence="1">
    <location>
        <begin position="217"/>
        <end position="282"/>
    </location>
</feature>
<feature type="disulfide bond" evidence="1">
    <location>
        <begin position="239"/>
        <end position="300"/>
    </location>
</feature>